<dbReference type="EC" id="1.3.1.54"/>
<dbReference type="EMBL" id="L21196">
    <property type="protein sequence ID" value="AAC37131.1"/>
    <property type="molecule type" value="Genomic_DNA"/>
</dbReference>
<dbReference type="PIR" id="T46837">
    <property type="entry name" value="T46837"/>
</dbReference>
<dbReference type="SMR" id="Q53139"/>
<dbReference type="UniPathway" id="UPA00148">
    <property type="reaction ID" value="UER00217"/>
</dbReference>
<dbReference type="GO" id="GO:0016994">
    <property type="term" value="F:precorrin-6A reductase activity"/>
    <property type="evidence" value="ECO:0007669"/>
    <property type="project" value="UniProtKB-EC"/>
</dbReference>
<dbReference type="GO" id="GO:0009236">
    <property type="term" value="P:cobalamin biosynthetic process"/>
    <property type="evidence" value="ECO:0007669"/>
    <property type="project" value="UniProtKB-UniPathway"/>
</dbReference>
<dbReference type="InterPro" id="IPR003723">
    <property type="entry name" value="Precorrin-6x_reduct"/>
</dbReference>
<dbReference type="NCBIfam" id="TIGR00715">
    <property type="entry name" value="precor6x_red"/>
    <property type="match status" value="1"/>
</dbReference>
<dbReference type="NCBIfam" id="NF005968">
    <property type="entry name" value="PRK08057.1-2"/>
    <property type="match status" value="1"/>
</dbReference>
<dbReference type="PANTHER" id="PTHR36925">
    <property type="entry name" value="COBALT-PRECORRIN-6A REDUCTASE"/>
    <property type="match status" value="1"/>
</dbReference>
<dbReference type="PANTHER" id="PTHR36925:SF1">
    <property type="entry name" value="COBALT-PRECORRIN-6A REDUCTASE"/>
    <property type="match status" value="1"/>
</dbReference>
<dbReference type="Pfam" id="PF02571">
    <property type="entry name" value="CbiJ"/>
    <property type="match status" value="1"/>
</dbReference>
<dbReference type="PROSITE" id="PS51014">
    <property type="entry name" value="COBK_CBIJ"/>
    <property type="match status" value="1"/>
</dbReference>
<comment type="function">
    <text>Catalyzes the reduction of the macrocycle of precorrin-6X into precorrin-6Y.</text>
</comment>
<comment type="catalytic activity">
    <reaction>
        <text>precorrin-6B + NADP(+) = precorrin-6A + NADPH + 2 H(+)</text>
        <dbReference type="Rhea" id="RHEA:23408"/>
        <dbReference type="ChEBI" id="CHEBI:15378"/>
        <dbReference type="ChEBI" id="CHEBI:57783"/>
        <dbReference type="ChEBI" id="CHEBI:58349"/>
        <dbReference type="ChEBI" id="CHEBI:58532"/>
        <dbReference type="ChEBI" id="CHEBI:77872"/>
        <dbReference type="EC" id="1.3.1.54"/>
    </reaction>
</comment>
<comment type="pathway">
    <text>Cofactor biosynthesis; adenosylcobalamin biosynthesis; cob(II)yrinate a,c-diamide from precorrin-2 (aerobic route): step 6/10.</text>
</comment>
<comment type="similarity">
    <text evidence="1">Belongs to the precorrin-6x reductase family.</text>
</comment>
<reference key="1">
    <citation type="journal article" date="1994" name="Gene">
        <title>Sequences of the cobalamin biosynthetic genes cobK, cobL and cobM from Rhodococcus sp. NI86/21.</title>
        <authorList>
            <person name="de Mot R."/>
            <person name="Nagy I."/>
            <person name="Schoofs G."/>
            <person name="Vanderleyden J."/>
        </authorList>
    </citation>
    <scope>NUCLEOTIDE SEQUENCE [GENOMIC DNA]</scope>
    <source>
        <strain>NI86/21</strain>
    </source>
</reference>
<feature type="chain" id="PRO_0000135922" description="Precorrin-6A reductase">
    <location>
        <begin position="1"/>
        <end position="248"/>
    </location>
</feature>
<organism>
    <name type="scientific">Rhodococcus erythropolis</name>
    <name type="common">Arthrobacter picolinophilus</name>
    <dbReference type="NCBI Taxonomy" id="1833"/>
    <lineage>
        <taxon>Bacteria</taxon>
        <taxon>Bacillati</taxon>
        <taxon>Actinomycetota</taxon>
        <taxon>Actinomycetes</taxon>
        <taxon>Mycobacteriales</taxon>
        <taxon>Nocardiaceae</taxon>
        <taxon>Rhodococcus</taxon>
        <taxon>Rhodococcus erythropolis group</taxon>
    </lineage>
</organism>
<gene>
    <name type="primary">cobK</name>
</gene>
<accession>Q53139</accession>
<sequence>MTRILILGGTGEARALAAALADVPGVEAVSSLAGRVRDPRLPVGDVRIGGFGGADGLAECVRAHPVDAIVDATHPFAAQITRNAADAAHRRGIPLVVLRRPEWSPRPGEHWHGAADLADAAELLPDLGTRIFLTIGRQGVDAFADLQALWFLIRAIDPPDVAMPPHSTLLLARGPFAVADETALMREHRIDVLVTKNSGGGQTDAKLDAARALGIPVLMIRRPPLPPATETVDDVAGAIAWVGTLTRR</sequence>
<name>COBK_RHOER</name>
<proteinExistence type="inferred from homology"/>
<protein>
    <recommendedName>
        <fullName>Precorrin-6A reductase</fullName>
        <ecNumber>1.3.1.54</ecNumber>
    </recommendedName>
    <alternativeName>
        <fullName>Precorrin-6X reductase</fullName>
    </alternativeName>
</protein>
<keyword id="KW-0169">Cobalamin biosynthesis</keyword>
<keyword id="KW-0521">NADP</keyword>
<keyword id="KW-0560">Oxidoreductase</keyword>
<evidence type="ECO:0000255" key="1">
    <source>
        <dbReference type="PROSITE-ProRule" id="PRU00356"/>
    </source>
</evidence>